<evidence type="ECO:0000255" key="1">
    <source>
        <dbReference type="HAMAP-Rule" id="MF_00502"/>
    </source>
</evidence>
<evidence type="ECO:0000305" key="2"/>
<sequence length="80" mass="9464">MKPEIHPIYREVVFHDVTSNFKFLTRSTMSTKETTLWEDGREYPLVKVEISSASHPFYTGKHKLVDTSGRIDKFKKRYAR</sequence>
<dbReference type="EMBL" id="AE003849">
    <property type="protein sequence ID" value="AAF84343.1"/>
    <property type="molecule type" value="Genomic_DNA"/>
</dbReference>
<dbReference type="PIR" id="C82669">
    <property type="entry name" value="C82669"/>
</dbReference>
<dbReference type="RefSeq" id="WP_004083672.1">
    <property type="nucleotide sequence ID" value="NC_002488.3"/>
</dbReference>
<dbReference type="SMR" id="Q9PD45"/>
<dbReference type="STRING" id="160492.XF_1534"/>
<dbReference type="KEGG" id="xfa:XF_1534"/>
<dbReference type="eggNOG" id="COG0254">
    <property type="taxonomic scope" value="Bacteria"/>
</dbReference>
<dbReference type="HOGENOM" id="CLU_114306_2_2_6"/>
<dbReference type="Proteomes" id="UP000000812">
    <property type="component" value="Chromosome"/>
</dbReference>
<dbReference type="GO" id="GO:1990904">
    <property type="term" value="C:ribonucleoprotein complex"/>
    <property type="evidence" value="ECO:0007669"/>
    <property type="project" value="UniProtKB-KW"/>
</dbReference>
<dbReference type="GO" id="GO:0005840">
    <property type="term" value="C:ribosome"/>
    <property type="evidence" value="ECO:0007669"/>
    <property type="project" value="UniProtKB-KW"/>
</dbReference>
<dbReference type="GO" id="GO:0003735">
    <property type="term" value="F:structural constituent of ribosome"/>
    <property type="evidence" value="ECO:0007669"/>
    <property type="project" value="InterPro"/>
</dbReference>
<dbReference type="GO" id="GO:0006412">
    <property type="term" value="P:translation"/>
    <property type="evidence" value="ECO:0007669"/>
    <property type="project" value="UniProtKB-UniRule"/>
</dbReference>
<dbReference type="Gene3D" id="4.10.830.30">
    <property type="entry name" value="Ribosomal protein L31"/>
    <property type="match status" value="1"/>
</dbReference>
<dbReference type="HAMAP" id="MF_00502">
    <property type="entry name" value="Ribosomal_bL31_2"/>
    <property type="match status" value="1"/>
</dbReference>
<dbReference type="InterPro" id="IPR034704">
    <property type="entry name" value="Ribosomal_bL28/bL31-like_sf"/>
</dbReference>
<dbReference type="InterPro" id="IPR002150">
    <property type="entry name" value="Ribosomal_bL31"/>
</dbReference>
<dbReference type="InterPro" id="IPR027493">
    <property type="entry name" value="Ribosomal_bL31_B"/>
</dbReference>
<dbReference type="InterPro" id="IPR042105">
    <property type="entry name" value="Ribosomal_bL31_sf"/>
</dbReference>
<dbReference type="NCBIfam" id="TIGR00105">
    <property type="entry name" value="L31"/>
    <property type="match status" value="1"/>
</dbReference>
<dbReference type="NCBIfam" id="NF002462">
    <property type="entry name" value="PRK01678.1"/>
    <property type="match status" value="1"/>
</dbReference>
<dbReference type="PANTHER" id="PTHR33280">
    <property type="entry name" value="50S RIBOSOMAL PROTEIN L31, CHLOROPLASTIC"/>
    <property type="match status" value="1"/>
</dbReference>
<dbReference type="PANTHER" id="PTHR33280:SF6">
    <property type="entry name" value="LARGE RIBOSOMAL SUBUNIT PROTEIN BL31A"/>
    <property type="match status" value="1"/>
</dbReference>
<dbReference type="Pfam" id="PF01197">
    <property type="entry name" value="Ribosomal_L31"/>
    <property type="match status" value="1"/>
</dbReference>
<dbReference type="PRINTS" id="PR01249">
    <property type="entry name" value="RIBOSOMALL31"/>
</dbReference>
<dbReference type="SUPFAM" id="SSF143800">
    <property type="entry name" value="L28p-like"/>
    <property type="match status" value="1"/>
</dbReference>
<dbReference type="PROSITE" id="PS01143">
    <property type="entry name" value="RIBOSOMAL_L31"/>
    <property type="match status" value="1"/>
</dbReference>
<reference key="1">
    <citation type="journal article" date="2000" name="Nature">
        <title>The genome sequence of the plant pathogen Xylella fastidiosa.</title>
        <authorList>
            <person name="Simpson A.J.G."/>
            <person name="Reinach F.C."/>
            <person name="Arruda P."/>
            <person name="Abreu F.A."/>
            <person name="Acencio M."/>
            <person name="Alvarenga R."/>
            <person name="Alves L.M.C."/>
            <person name="Araya J.E."/>
            <person name="Baia G.S."/>
            <person name="Baptista C.S."/>
            <person name="Barros M.H."/>
            <person name="Bonaccorsi E.D."/>
            <person name="Bordin S."/>
            <person name="Bove J.M."/>
            <person name="Briones M.R.S."/>
            <person name="Bueno M.R.P."/>
            <person name="Camargo A.A."/>
            <person name="Camargo L.E.A."/>
            <person name="Carraro D.M."/>
            <person name="Carrer H."/>
            <person name="Colauto N.B."/>
            <person name="Colombo C."/>
            <person name="Costa F.F."/>
            <person name="Costa M.C.R."/>
            <person name="Costa-Neto C.M."/>
            <person name="Coutinho L.L."/>
            <person name="Cristofani M."/>
            <person name="Dias-Neto E."/>
            <person name="Docena C."/>
            <person name="El-Dorry H."/>
            <person name="Facincani A.P."/>
            <person name="Ferreira A.J.S."/>
            <person name="Ferreira V.C.A."/>
            <person name="Ferro J.A."/>
            <person name="Fraga J.S."/>
            <person name="Franca S.C."/>
            <person name="Franco M.C."/>
            <person name="Frohme M."/>
            <person name="Furlan L.R."/>
            <person name="Garnier M."/>
            <person name="Goldman G.H."/>
            <person name="Goldman M.H.S."/>
            <person name="Gomes S.L."/>
            <person name="Gruber A."/>
            <person name="Ho P.L."/>
            <person name="Hoheisel J.D."/>
            <person name="Junqueira M.L."/>
            <person name="Kemper E.L."/>
            <person name="Kitajima J.P."/>
            <person name="Krieger J.E."/>
            <person name="Kuramae E.E."/>
            <person name="Laigret F."/>
            <person name="Lambais M.R."/>
            <person name="Leite L.C.C."/>
            <person name="Lemos E.G.M."/>
            <person name="Lemos M.V.F."/>
            <person name="Lopes S.A."/>
            <person name="Lopes C.R."/>
            <person name="Machado J.A."/>
            <person name="Machado M.A."/>
            <person name="Madeira A.M.B.N."/>
            <person name="Madeira H.M.F."/>
            <person name="Marino C.L."/>
            <person name="Marques M.V."/>
            <person name="Martins E.A.L."/>
            <person name="Martins E.M.F."/>
            <person name="Matsukuma A.Y."/>
            <person name="Menck C.F.M."/>
            <person name="Miracca E.C."/>
            <person name="Miyaki C.Y."/>
            <person name="Monteiro-Vitorello C.B."/>
            <person name="Moon D.H."/>
            <person name="Nagai M.A."/>
            <person name="Nascimento A.L.T.O."/>
            <person name="Netto L.E.S."/>
            <person name="Nhani A. Jr."/>
            <person name="Nobrega F.G."/>
            <person name="Nunes L.R."/>
            <person name="Oliveira M.A."/>
            <person name="de Oliveira M.C."/>
            <person name="de Oliveira R.C."/>
            <person name="Palmieri D.A."/>
            <person name="Paris A."/>
            <person name="Peixoto B.R."/>
            <person name="Pereira G.A.G."/>
            <person name="Pereira H.A. Jr."/>
            <person name="Pesquero J.B."/>
            <person name="Quaggio R.B."/>
            <person name="Roberto P.G."/>
            <person name="Rodrigues V."/>
            <person name="de Rosa A.J.M."/>
            <person name="de Rosa V.E. Jr."/>
            <person name="de Sa R.G."/>
            <person name="Santelli R.V."/>
            <person name="Sawasaki H.E."/>
            <person name="da Silva A.C.R."/>
            <person name="da Silva A.M."/>
            <person name="da Silva F.R."/>
            <person name="Silva W.A. Jr."/>
            <person name="da Silveira J.F."/>
            <person name="Silvestri M.L.Z."/>
            <person name="Siqueira W.J."/>
            <person name="de Souza A.A."/>
            <person name="de Souza A.P."/>
            <person name="Terenzi M.F."/>
            <person name="Truffi D."/>
            <person name="Tsai S.M."/>
            <person name="Tsuhako M.H."/>
            <person name="Vallada H."/>
            <person name="Van Sluys M.A."/>
            <person name="Verjovski-Almeida S."/>
            <person name="Vettore A.L."/>
            <person name="Zago M.A."/>
            <person name="Zatz M."/>
            <person name="Meidanis J."/>
            <person name="Setubal J.C."/>
        </authorList>
    </citation>
    <scope>NUCLEOTIDE SEQUENCE [LARGE SCALE GENOMIC DNA]</scope>
    <source>
        <strain>9a5c</strain>
    </source>
</reference>
<proteinExistence type="inferred from homology"/>
<feature type="chain" id="PRO_0000173287" description="Large ribosomal subunit protein bL31B">
    <location>
        <begin position="1"/>
        <end position="80"/>
    </location>
</feature>
<organism>
    <name type="scientific">Xylella fastidiosa (strain 9a5c)</name>
    <dbReference type="NCBI Taxonomy" id="160492"/>
    <lineage>
        <taxon>Bacteria</taxon>
        <taxon>Pseudomonadati</taxon>
        <taxon>Pseudomonadota</taxon>
        <taxon>Gammaproteobacteria</taxon>
        <taxon>Lysobacterales</taxon>
        <taxon>Lysobacteraceae</taxon>
        <taxon>Xylella</taxon>
    </lineage>
</organism>
<protein>
    <recommendedName>
        <fullName evidence="1">Large ribosomal subunit protein bL31B</fullName>
    </recommendedName>
    <alternativeName>
        <fullName evidence="2">50S ribosomal protein L31 type B</fullName>
    </alternativeName>
</protein>
<gene>
    <name evidence="1" type="primary">rpmE2</name>
    <name type="ordered locus">XF_1534</name>
</gene>
<name>RL31B_XYLFA</name>
<comment type="subunit">
    <text evidence="1">Part of the 50S ribosomal subunit.</text>
</comment>
<comment type="similarity">
    <text evidence="1">Belongs to the bacterial ribosomal protein bL31 family. Type B subfamily.</text>
</comment>
<accession>Q9PD45</accession>
<keyword id="KW-0687">Ribonucleoprotein</keyword>
<keyword id="KW-0689">Ribosomal protein</keyword>